<gene>
    <name evidence="1" type="primary">surE</name>
    <name type="ordered locus">HH_0335</name>
</gene>
<dbReference type="EC" id="3.1.3.5" evidence="1"/>
<dbReference type="EMBL" id="AE017125">
    <property type="protein sequence ID" value="AAP76932.1"/>
    <property type="molecule type" value="Genomic_DNA"/>
</dbReference>
<dbReference type="RefSeq" id="WP_011115178.1">
    <property type="nucleotide sequence ID" value="NC_004917.1"/>
</dbReference>
<dbReference type="SMR" id="Q7VJA8"/>
<dbReference type="STRING" id="235279.HH_0335"/>
<dbReference type="KEGG" id="hhe:HH_0335"/>
<dbReference type="eggNOG" id="COG0496">
    <property type="taxonomic scope" value="Bacteria"/>
</dbReference>
<dbReference type="HOGENOM" id="CLU_045192_1_3_7"/>
<dbReference type="OrthoDB" id="9780815at2"/>
<dbReference type="Proteomes" id="UP000002495">
    <property type="component" value="Chromosome"/>
</dbReference>
<dbReference type="GO" id="GO:0005737">
    <property type="term" value="C:cytoplasm"/>
    <property type="evidence" value="ECO:0007669"/>
    <property type="project" value="UniProtKB-SubCell"/>
</dbReference>
<dbReference type="GO" id="GO:0008254">
    <property type="term" value="F:3'-nucleotidase activity"/>
    <property type="evidence" value="ECO:0007669"/>
    <property type="project" value="TreeGrafter"/>
</dbReference>
<dbReference type="GO" id="GO:0008253">
    <property type="term" value="F:5'-nucleotidase activity"/>
    <property type="evidence" value="ECO:0007669"/>
    <property type="project" value="UniProtKB-UniRule"/>
</dbReference>
<dbReference type="GO" id="GO:0004309">
    <property type="term" value="F:exopolyphosphatase activity"/>
    <property type="evidence" value="ECO:0007669"/>
    <property type="project" value="TreeGrafter"/>
</dbReference>
<dbReference type="GO" id="GO:0046872">
    <property type="term" value="F:metal ion binding"/>
    <property type="evidence" value="ECO:0007669"/>
    <property type="project" value="UniProtKB-UniRule"/>
</dbReference>
<dbReference type="GO" id="GO:0000166">
    <property type="term" value="F:nucleotide binding"/>
    <property type="evidence" value="ECO:0007669"/>
    <property type="project" value="UniProtKB-KW"/>
</dbReference>
<dbReference type="FunFam" id="3.40.1210.10:FF:000001">
    <property type="entry name" value="5'/3'-nucleotidase SurE"/>
    <property type="match status" value="1"/>
</dbReference>
<dbReference type="Gene3D" id="3.40.1210.10">
    <property type="entry name" value="Survival protein SurE-like phosphatase/nucleotidase"/>
    <property type="match status" value="1"/>
</dbReference>
<dbReference type="HAMAP" id="MF_00060">
    <property type="entry name" value="SurE"/>
    <property type="match status" value="1"/>
</dbReference>
<dbReference type="InterPro" id="IPR030048">
    <property type="entry name" value="SurE"/>
</dbReference>
<dbReference type="InterPro" id="IPR002828">
    <property type="entry name" value="SurE-like_Pase/nucleotidase"/>
</dbReference>
<dbReference type="InterPro" id="IPR036523">
    <property type="entry name" value="SurE-like_sf"/>
</dbReference>
<dbReference type="NCBIfam" id="NF001490">
    <property type="entry name" value="PRK00346.1-4"/>
    <property type="match status" value="1"/>
</dbReference>
<dbReference type="NCBIfam" id="NF001494">
    <property type="entry name" value="PRK00346.2-4"/>
    <property type="match status" value="1"/>
</dbReference>
<dbReference type="NCBIfam" id="TIGR00087">
    <property type="entry name" value="surE"/>
    <property type="match status" value="1"/>
</dbReference>
<dbReference type="PANTHER" id="PTHR30457">
    <property type="entry name" value="5'-NUCLEOTIDASE SURE"/>
    <property type="match status" value="1"/>
</dbReference>
<dbReference type="PANTHER" id="PTHR30457:SF12">
    <property type="entry name" value="5'_3'-NUCLEOTIDASE SURE"/>
    <property type="match status" value="1"/>
</dbReference>
<dbReference type="Pfam" id="PF01975">
    <property type="entry name" value="SurE"/>
    <property type="match status" value="1"/>
</dbReference>
<dbReference type="SUPFAM" id="SSF64167">
    <property type="entry name" value="SurE-like"/>
    <property type="match status" value="1"/>
</dbReference>
<proteinExistence type="inferred from homology"/>
<organism>
    <name type="scientific">Helicobacter hepaticus (strain ATCC 51449 / 3B1)</name>
    <dbReference type="NCBI Taxonomy" id="235279"/>
    <lineage>
        <taxon>Bacteria</taxon>
        <taxon>Pseudomonadati</taxon>
        <taxon>Campylobacterota</taxon>
        <taxon>Epsilonproteobacteria</taxon>
        <taxon>Campylobacterales</taxon>
        <taxon>Helicobacteraceae</taxon>
        <taxon>Helicobacter</taxon>
    </lineage>
</organism>
<name>SURE_HELHP</name>
<comment type="function">
    <text evidence="1">Nucleotidase that shows phosphatase activity on nucleoside 5'-monophosphates.</text>
</comment>
<comment type="catalytic activity">
    <reaction evidence="1">
        <text>a ribonucleoside 5'-phosphate + H2O = a ribonucleoside + phosphate</text>
        <dbReference type="Rhea" id="RHEA:12484"/>
        <dbReference type="ChEBI" id="CHEBI:15377"/>
        <dbReference type="ChEBI" id="CHEBI:18254"/>
        <dbReference type="ChEBI" id="CHEBI:43474"/>
        <dbReference type="ChEBI" id="CHEBI:58043"/>
        <dbReference type="EC" id="3.1.3.5"/>
    </reaction>
</comment>
<comment type="cofactor">
    <cofactor evidence="1">
        <name>a divalent metal cation</name>
        <dbReference type="ChEBI" id="CHEBI:60240"/>
    </cofactor>
    <text evidence="1">Binds 1 divalent metal cation per subunit.</text>
</comment>
<comment type="subcellular location">
    <subcellularLocation>
        <location evidence="1">Cytoplasm</location>
    </subcellularLocation>
</comment>
<comment type="similarity">
    <text evidence="1">Belongs to the SurE nucleotidase family.</text>
</comment>
<keyword id="KW-0963">Cytoplasm</keyword>
<keyword id="KW-0378">Hydrolase</keyword>
<keyword id="KW-0479">Metal-binding</keyword>
<keyword id="KW-0547">Nucleotide-binding</keyword>
<keyword id="KW-1185">Reference proteome</keyword>
<accession>Q7VJA8</accession>
<reference key="1">
    <citation type="journal article" date="2003" name="Proc. Natl. Acad. Sci. U.S.A.">
        <title>The complete genome sequence of the carcinogenic bacterium Helicobacter hepaticus.</title>
        <authorList>
            <person name="Suerbaum S."/>
            <person name="Josenhans C."/>
            <person name="Sterzenbach T."/>
            <person name="Drescher B."/>
            <person name="Brandt P."/>
            <person name="Bell M."/>
            <person name="Droege M."/>
            <person name="Fartmann B."/>
            <person name="Fischer H.-P."/>
            <person name="Ge Z."/>
            <person name="Hoerster A."/>
            <person name="Holland R."/>
            <person name="Klein K."/>
            <person name="Koenig J."/>
            <person name="Macko L."/>
            <person name="Mendz G.L."/>
            <person name="Nyakatura G."/>
            <person name="Schauer D.B."/>
            <person name="Shen Z."/>
            <person name="Weber J."/>
            <person name="Frosch M."/>
            <person name="Fox J.G."/>
        </authorList>
    </citation>
    <scope>NUCLEOTIDE SEQUENCE [LARGE SCALE GENOMIC DNA]</scope>
    <source>
        <strain>ATCC 51449 / 3B1</strain>
    </source>
</reference>
<protein>
    <recommendedName>
        <fullName evidence="1">5'-nucleotidase SurE</fullName>
        <ecNumber evidence="1">3.1.3.5</ecNumber>
    </recommendedName>
    <alternativeName>
        <fullName evidence="1">Nucleoside 5'-monophosphate phosphohydrolase</fullName>
    </alternativeName>
</protein>
<sequence>MKRILLTNDDGFDSSGLLALKDALKDIAHVMVVAPASEKSACGHGLTLTRPLSFVQLDDDFYKLEDGTPSDCVYLALNTLYKASCKPDLVISGINLGSNMGEDITYSGTAAGAMEGCIQGVPSIAISQLMPDKNCSKHFDFSLAKECIYKITQLIFAKGFPLGERKFLNINIPHIKPKECKGYKITQMGYRIYADNAHLHRNPRGQEYYWLGLHPLEWEERNDMPHSYGSDFKATHEHYVSITPIKLDMTSYEDSSSLCEWIQL</sequence>
<evidence type="ECO:0000255" key="1">
    <source>
        <dbReference type="HAMAP-Rule" id="MF_00060"/>
    </source>
</evidence>
<feature type="chain" id="PRO_0000111816" description="5'-nucleotidase SurE">
    <location>
        <begin position="1"/>
        <end position="264"/>
    </location>
</feature>
<feature type="binding site" evidence="1">
    <location>
        <position position="9"/>
    </location>
    <ligand>
        <name>a divalent metal cation</name>
        <dbReference type="ChEBI" id="CHEBI:60240"/>
    </ligand>
</feature>
<feature type="binding site" evidence="1">
    <location>
        <position position="10"/>
    </location>
    <ligand>
        <name>a divalent metal cation</name>
        <dbReference type="ChEBI" id="CHEBI:60240"/>
    </ligand>
</feature>
<feature type="binding site" evidence="1">
    <location>
        <position position="40"/>
    </location>
    <ligand>
        <name>a divalent metal cation</name>
        <dbReference type="ChEBI" id="CHEBI:60240"/>
    </ligand>
</feature>
<feature type="binding site" evidence="1">
    <location>
        <position position="95"/>
    </location>
    <ligand>
        <name>a divalent metal cation</name>
        <dbReference type="ChEBI" id="CHEBI:60240"/>
    </ligand>
</feature>